<protein>
    <recommendedName>
        <fullName evidence="1">Uroporphyrinogen decarboxylase</fullName>
        <shortName evidence="1">UPD</shortName>
        <shortName evidence="1">URO-D</shortName>
        <ecNumber evidence="1">4.1.1.37</ecNumber>
    </recommendedName>
</protein>
<name>DCUP_AZOSB</name>
<keyword id="KW-0963">Cytoplasm</keyword>
<keyword id="KW-0210">Decarboxylase</keyword>
<keyword id="KW-0456">Lyase</keyword>
<keyword id="KW-0627">Porphyrin biosynthesis</keyword>
<keyword id="KW-1185">Reference proteome</keyword>
<accession>A1KCN9</accession>
<reference key="1">
    <citation type="journal article" date="2006" name="Nat. Biotechnol.">
        <title>Complete genome of the mutualistic, N2-fixing grass endophyte Azoarcus sp. strain BH72.</title>
        <authorList>
            <person name="Krause A."/>
            <person name="Ramakumar A."/>
            <person name="Bartels D."/>
            <person name="Battistoni F."/>
            <person name="Bekel T."/>
            <person name="Boch J."/>
            <person name="Boehm M."/>
            <person name="Friedrich F."/>
            <person name="Hurek T."/>
            <person name="Krause L."/>
            <person name="Linke B."/>
            <person name="McHardy A.C."/>
            <person name="Sarkar A."/>
            <person name="Schneiker S."/>
            <person name="Syed A.A."/>
            <person name="Thauer R."/>
            <person name="Vorhoelter F.-J."/>
            <person name="Weidner S."/>
            <person name="Puehler A."/>
            <person name="Reinhold-Hurek B."/>
            <person name="Kaiser O."/>
            <person name="Goesmann A."/>
        </authorList>
    </citation>
    <scope>NUCLEOTIDE SEQUENCE [LARGE SCALE GENOMIC DNA]</scope>
    <source>
        <strain>BH72</strain>
    </source>
</reference>
<sequence length="358" mass="39480">MSRLKNDTFLRALLRQPTEYTPVWLMRQAGRYLPEYCETRKRAGSFLNLCKSPALACEVTLQPLARYDLDAAILFSDILTVPDAMGLGLYFAEGEGPRFERPLRDEWEIRNLSVPDPHAELQYVMDAVSEIRRALDGSVPLIGFSGSPWTLACYMVEGGSSDDYRRIKTMAYSRPDLLHHILGVTADAVVQYLNAQIEAGAQAVMVFDSWGGVLAEAAYREFSLRYLQRVVDGLIREREGQRVPSIVFTKGGGIWLESIAAIGSDAVGLDWTMDIGRARALVGQRVALQGNLDPSILFAPPEAVAAEARRVLDAYGPHPGHVFNLGHGISQFTPPENVSVLVDTVHDHSRKLRAAVGG</sequence>
<evidence type="ECO:0000255" key="1">
    <source>
        <dbReference type="HAMAP-Rule" id="MF_00218"/>
    </source>
</evidence>
<comment type="function">
    <text evidence="1">Catalyzes the decarboxylation of four acetate groups of uroporphyrinogen-III to yield coproporphyrinogen-III.</text>
</comment>
<comment type="catalytic activity">
    <reaction evidence="1">
        <text>uroporphyrinogen III + 4 H(+) = coproporphyrinogen III + 4 CO2</text>
        <dbReference type="Rhea" id="RHEA:19865"/>
        <dbReference type="ChEBI" id="CHEBI:15378"/>
        <dbReference type="ChEBI" id="CHEBI:16526"/>
        <dbReference type="ChEBI" id="CHEBI:57308"/>
        <dbReference type="ChEBI" id="CHEBI:57309"/>
        <dbReference type="EC" id="4.1.1.37"/>
    </reaction>
</comment>
<comment type="pathway">
    <text evidence="1">Porphyrin-containing compound metabolism; protoporphyrin-IX biosynthesis; coproporphyrinogen-III from 5-aminolevulinate: step 4/4.</text>
</comment>
<comment type="subunit">
    <text evidence="1">Homodimer.</text>
</comment>
<comment type="subcellular location">
    <subcellularLocation>
        <location evidence="1">Cytoplasm</location>
    </subcellularLocation>
</comment>
<comment type="similarity">
    <text evidence="1">Belongs to the uroporphyrinogen decarboxylase family.</text>
</comment>
<organism>
    <name type="scientific">Azoarcus sp. (strain BH72)</name>
    <dbReference type="NCBI Taxonomy" id="418699"/>
    <lineage>
        <taxon>Bacteria</taxon>
        <taxon>Pseudomonadati</taxon>
        <taxon>Pseudomonadota</taxon>
        <taxon>Betaproteobacteria</taxon>
        <taxon>Rhodocyclales</taxon>
        <taxon>Zoogloeaceae</taxon>
        <taxon>Azoarcus</taxon>
    </lineage>
</organism>
<proteinExistence type="inferred from homology"/>
<gene>
    <name evidence="1" type="primary">hemE</name>
    <name type="ordered locus">azo3979</name>
</gene>
<dbReference type="EC" id="4.1.1.37" evidence="1"/>
<dbReference type="EMBL" id="AM406670">
    <property type="protein sequence ID" value="CAL96595.1"/>
    <property type="molecule type" value="Genomic_DNA"/>
</dbReference>
<dbReference type="RefSeq" id="WP_011767701.1">
    <property type="nucleotide sequence ID" value="NC_008702.1"/>
</dbReference>
<dbReference type="SMR" id="A1KCN9"/>
<dbReference type="STRING" id="62928.azo3979"/>
<dbReference type="KEGG" id="aoa:dqs_4122"/>
<dbReference type="KEGG" id="azo:azo3979"/>
<dbReference type="eggNOG" id="COG0407">
    <property type="taxonomic scope" value="Bacteria"/>
</dbReference>
<dbReference type="HOGENOM" id="CLU_040933_0_0_4"/>
<dbReference type="OrthoDB" id="9806656at2"/>
<dbReference type="UniPathway" id="UPA00251">
    <property type="reaction ID" value="UER00321"/>
</dbReference>
<dbReference type="Proteomes" id="UP000002588">
    <property type="component" value="Chromosome"/>
</dbReference>
<dbReference type="GO" id="GO:0005829">
    <property type="term" value="C:cytosol"/>
    <property type="evidence" value="ECO:0007669"/>
    <property type="project" value="TreeGrafter"/>
</dbReference>
<dbReference type="GO" id="GO:0004853">
    <property type="term" value="F:uroporphyrinogen decarboxylase activity"/>
    <property type="evidence" value="ECO:0007669"/>
    <property type="project" value="UniProtKB-UniRule"/>
</dbReference>
<dbReference type="GO" id="GO:0019353">
    <property type="term" value="P:protoporphyrinogen IX biosynthetic process from glutamate"/>
    <property type="evidence" value="ECO:0007669"/>
    <property type="project" value="TreeGrafter"/>
</dbReference>
<dbReference type="CDD" id="cd00717">
    <property type="entry name" value="URO-D"/>
    <property type="match status" value="1"/>
</dbReference>
<dbReference type="FunFam" id="3.20.20.210:FF:000001">
    <property type="entry name" value="Uroporphyrinogen decarboxylase"/>
    <property type="match status" value="1"/>
</dbReference>
<dbReference type="Gene3D" id="3.20.20.210">
    <property type="match status" value="1"/>
</dbReference>
<dbReference type="HAMAP" id="MF_00218">
    <property type="entry name" value="URO_D"/>
    <property type="match status" value="1"/>
</dbReference>
<dbReference type="InterPro" id="IPR038071">
    <property type="entry name" value="UROD/MetE-like_sf"/>
</dbReference>
<dbReference type="InterPro" id="IPR006361">
    <property type="entry name" value="Uroporphyrinogen_deCO2ase_HemE"/>
</dbReference>
<dbReference type="InterPro" id="IPR000257">
    <property type="entry name" value="Uroporphyrinogen_deCOase"/>
</dbReference>
<dbReference type="NCBIfam" id="TIGR01464">
    <property type="entry name" value="hemE"/>
    <property type="match status" value="1"/>
</dbReference>
<dbReference type="PANTHER" id="PTHR21091">
    <property type="entry name" value="METHYLTETRAHYDROFOLATE:HOMOCYSTEINE METHYLTRANSFERASE RELATED"/>
    <property type="match status" value="1"/>
</dbReference>
<dbReference type="PANTHER" id="PTHR21091:SF169">
    <property type="entry name" value="UROPORPHYRINOGEN DECARBOXYLASE"/>
    <property type="match status" value="1"/>
</dbReference>
<dbReference type="Pfam" id="PF01208">
    <property type="entry name" value="URO-D"/>
    <property type="match status" value="1"/>
</dbReference>
<dbReference type="SUPFAM" id="SSF51726">
    <property type="entry name" value="UROD/MetE-like"/>
    <property type="match status" value="1"/>
</dbReference>
<dbReference type="PROSITE" id="PS00906">
    <property type="entry name" value="UROD_1"/>
    <property type="match status" value="1"/>
</dbReference>
<dbReference type="PROSITE" id="PS00907">
    <property type="entry name" value="UROD_2"/>
    <property type="match status" value="1"/>
</dbReference>
<feature type="chain" id="PRO_1000023871" description="Uroporphyrinogen decarboxylase">
    <location>
        <begin position="1"/>
        <end position="358"/>
    </location>
</feature>
<feature type="binding site" evidence="1">
    <location>
        <begin position="27"/>
        <end position="31"/>
    </location>
    <ligand>
        <name>substrate</name>
    </ligand>
</feature>
<feature type="binding site" evidence="1">
    <location>
        <position position="77"/>
    </location>
    <ligand>
        <name>substrate</name>
    </ligand>
</feature>
<feature type="binding site" evidence="1">
    <location>
        <position position="154"/>
    </location>
    <ligand>
        <name>substrate</name>
    </ligand>
</feature>
<feature type="binding site" evidence="1">
    <location>
        <position position="209"/>
    </location>
    <ligand>
        <name>substrate</name>
    </ligand>
</feature>
<feature type="binding site" evidence="1">
    <location>
        <position position="327"/>
    </location>
    <ligand>
        <name>substrate</name>
    </ligand>
</feature>
<feature type="site" description="Transition state stabilizer" evidence="1">
    <location>
        <position position="77"/>
    </location>
</feature>